<keyword id="KW-0997">Cell inner membrane</keyword>
<keyword id="KW-1003">Cell membrane</keyword>
<keyword id="KW-0472">Membrane</keyword>
<keyword id="KW-0653">Protein transport</keyword>
<keyword id="KW-0811">Translocation</keyword>
<keyword id="KW-0812">Transmembrane</keyword>
<keyword id="KW-1133">Transmembrane helix</keyword>
<keyword id="KW-0813">Transport</keyword>
<organism>
    <name type="scientific">Marinobacter nauticus (strain ATCC 700491 / DSM 11845 / VT8)</name>
    <name type="common">Marinobacter aquaeolei</name>
    <dbReference type="NCBI Taxonomy" id="351348"/>
    <lineage>
        <taxon>Bacteria</taxon>
        <taxon>Pseudomonadati</taxon>
        <taxon>Pseudomonadota</taxon>
        <taxon>Gammaproteobacteria</taxon>
        <taxon>Pseudomonadales</taxon>
        <taxon>Marinobacteraceae</taxon>
        <taxon>Marinobacter</taxon>
    </lineage>
</organism>
<dbReference type="EMBL" id="CP000514">
    <property type="protein sequence ID" value="ABM20492.1"/>
    <property type="molecule type" value="Genomic_DNA"/>
</dbReference>
<dbReference type="RefSeq" id="WP_011786833.1">
    <property type="nucleotide sequence ID" value="NC_008740.1"/>
</dbReference>
<dbReference type="SMR" id="A1U673"/>
<dbReference type="STRING" id="351348.Maqu_3421"/>
<dbReference type="KEGG" id="maq:Maqu_3421"/>
<dbReference type="eggNOG" id="COG1826">
    <property type="taxonomic scope" value="Bacteria"/>
</dbReference>
<dbReference type="HOGENOM" id="CLU_086034_1_1_6"/>
<dbReference type="OrthoDB" id="9816005at2"/>
<dbReference type="Proteomes" id="UP000000998">
    <property type="component" value="Chromosome"/>
</dbReference>
<dbReference type="GO" id="GO:0033281">
    <property type="term" value="C:TAT protein transport complex"/>
    <property type="evidence" value="ECO:0007669"/>
    <property type="project" value="UniProtKB-UniRule"/>
</dbReference>
<dbReference type="GO" id="GO:0008320">
    <property type="term" value="F:protein transmembrane transporter activity"/>
    <property type="evidence" value="ECO:0007669"/>
    <property type="project" value="UniProtKB-UniRule"/>
</dbReference>
<dbReference type="GO" id="GO:0043953">
    <property type="term" value="P:protein transport by the Tat complex"/>
    <property type="evidence" value="ECO:0007669"/>
    <property type="project" value="UniProtKB-UniRule"/>
</dbReference>
<dbReference type="Gene3D" id="1.20.5.3310">
    <property type="match status" value="1"/>
</dbReference>
<dbReference type="HAMAP" id="MF_00237">
    <property type="entry name" value="TatB"/>
    <property type="match status" value="1"/>
</dbReference>
<dbReference type="InterPro" id="IPR003369">
    <property type="entry name" value="TatA/B/E"/>
</dbReference>
<dbReference type="InterPro" id="IPR018448">
    <property type="entry name" value="TatB"/>
</dbReference>
<dbReference type="NCBIfam" id="TIGR01410">
    <property type="entry name" value="tatB"/>
    <property type="match status" value="1"/>
</dbReference>
<dbReference type="PANTHER" id="PTHR33162">
    <property type="entry name" value="SEC-INDEPENDENT PROTEIN TRANSLOCASE PROTEIN TATA, CHLOROPLASTIC"/>
    <property type="match status" value="1"/>
</dbReference>
<dbReference type="PANTHER" id="PTHR33162:SF1">
    <property type="entry name" value="SEC-INDEPENDENT PROTEIN TRANSLOCASE PROTEIN TATA, CHLOROPLASTIC"/>
    <property type="match status" value="1"/>
</dbReference>
<dbReference type="Pfam" id="PF02416">
    <property type="entry name" value="TatA_B_E"/>
    <property type="match status" value="1"/>
</dbReference>
<dbReference type="PRINTS" id="PR01506">
    <property type="entry name" value="TATBPROTEIN"/>
</dbReference>
<evidence type="ECO:0000255" key="1">
    <source>
        <dbReference type="HAMAP-Rule" id="MF_00237"/>
    </source>
</evidence>
<evidence type="ECO:0000256" key="2">
    <source>
        <dbReference type="SAM" id="MobiDB-lite"/>
    </source>
</evidence>
<gene>
    <name evidence="1" type="primary">tatB</name>
    <name type="ordered locus">Maqu_3421</name>
</gene>
<name>TATB_MARN8</name>
<protein>
    <recommendedName>
        <fullName evidence="1">Sec-independent protein translocase protein TatB</fullName>
    </recommendedName>
</protein>
<accession>A1U673</accession>
<feature type="chain" id="PRO_0000301182" description="Sec-independent protein translocase protein TatB">
    <location>
        <begin position="1"/>
        <end position="151"/>
    </location>
</feature>
<feature type="transmembrane region" description="Helical" evidence="1">
    <location>
        <begin position="1"/>
        <end position="21"/>
    </location>
</feature>
<feature type="region of interest" description="Disordered" evidence="2">
    <location>
        <begin position="87"/>
        <end position="151"/>
    </location>
</feature>
<feature type="compositionally biased region" description="Basic and acidic residues" evidence="2">
    <location>
        <begin position="87"/>
        <end position="99"/>
    </location>
</feature>
<feature type="compositionally biased region" description="Basic and acidic residues" evidence="2">
    <location>
        <begin position="122"/>
        <end position="132"/>
    </location>
</feature>
<feature type="compositionally biased region" description="Low complexity" evidence="2">
    <location>
        <begin position="134"/>
        <end position="151"/>
    </location>
</feature>
<comment type="function">
    <text evidence="1">Part of the twin-arginine translocation (Tat) system that transports large folded proteins containing a characteristic twin-arginine motif in their signal peptide across membranes. Together with TatC, TatB is part of a receptor directly interacting with Tat signal peptides. TatB may form an oligomeric binding site that transiently accommodates folded Tat precursor proteins before their translocation.</text>
</comment>
<comment type="subunit">
    <text evidence="1">The Tat system comprises two distinct complexes: a TatABC complex, containing multiple copies of TatA, TatB and TatC subunits, and a separate TatA complex, containing only TatA subunits. Substrates initially bind to the TatABC complex, which probably triggers association of the separate TatA complex to form the active translocon.</text>
</comment>
<comment type="subcellular location">
    <subcellularLocation>
        <location evidence="1">Cell inner membrane</location>
        <topology evidence="1">Single-pass membrane protein</topology>
    </subcellularLocation>
</comment>
<comment type="similarity">
    <text evidence="1">Belongs to the TatB family.</text>
</comment>
<sequence>MFDIGFLELLICGVIALLVLGPERLPTAARAAGRWIGGARRMVSQFTSELDRQLKAEELREELRKAGDVGLDDVEKTVRGALDEAKKYEHMILPDDQTRKPRPAPATRRVTPPSPEAGEQPEPPHEPVRDEAAASDQPSDSSPTSPSDKYS</sequence>
<proteinExistence type="inferred from homology"/>
<reference key="1">
    <citation type="journal article" date="2011" name="Appl. Environ. Microbiol.">
        <title>Genomic potential of Marinobacter aquaeolei, a biogeochemical 'opportunitroph'.</title>
        <authorList>
            <person name="Singer E."/>
            <person name="Webb E.A."/>
            <person name="Nelson W.C."/>
            <person name="Heidelberg J.F."/>
            <person name="Ivanova N."/>
            <person name="Pati A."/>
            <person name="Edwards K.J."/>
        </authorList>
    </citation>
    <scope>NUCLEOTIDE SEQUENCE [LARGE SCALE GENOMIC DNA]</scope>
    <source>
        <strain>ATCC 700491 / DSM 11845 / VT8</strain>
    </source>
</reference>